<dbReference type="EMBL" id="U40070">
    <property type="protein sequence ID" value="AAC46984.1"/>
    <property type="molecule type" value="mRNA"/>
</dbReference>
<dbReference type="EMBL" id="U46688">
    <property type="protein sequence ID" value="AAB02195.1"/>
    <property type="molecule type" value="mRNA"/>
</dbReference>
<dbReference type="EMBL" id="AE014297">
    <property type="protein sequence ID" value="AAN14350.2"/>
    <property type="molecule type" value="Genomic_DNA"/>
</dbReference>
<dbReference type="EMBL" id="AE014297">
    <property type="protein sequence ID" value="AAN14351.2"/>
    <property type="molecule type" value="Genomic_DNA"/>
</dbReference>
<dbReference type="EMBL" id="AE014297">
    <property type="protein sequence ID" value="AAS65180.1"/>
    <property type="molecule type" value="Genomic_DNA"/>
</dbReference>
<dbReference type="EMBL" id="AE014297">
    <property type="protein sequence ID" value="AAX52969.1"/>
    <property type="molecule type" value="Genomic_DNA"/>
</dbReference>
<dbReference type="EMBL" id="BT021314">
    <property type="protein sequence ID" value="AAX33462.1"/>
    <property type="molecule type" value="mRNA"/>
</dbReference>
<dbReference type="EMBL" id="AY094839">
    <property type="protein sequence ID" value="AAM11192.1"/>
    <property type="status" value="ALT_INIT"/>
    <property type="molecule type" value="mRNA"/>
</dbReference>
<dbReference type="RefSeq" id="NP_001014643.1">
    <molecule id="Q24151-4"/>
    <property type="nucleotide sequence ID" value="NM_001014643.2"/>
</dbReference>
<dbReference type="RefSeq" id="NP_001262757.1">
    <molecule id="Q24151-4"/>
    <property type="nucleotide sequence ID" value="NM_001275828.1"/>
</dbReference>
<dbReference type="RefSeq" id="NP_001262762.1">
    <molecule id="Q24151-1"/>
    <property type="nucleotide sequence ID" value="NM_001275833.1"/>
</dbReference>
<dbReference type="RefSeq" id="NP_732516.2">
    <molecule id="Q24151-2"/>
    <property type="nucleotide sequence ID" value="NM_169899.3"/>
</dbReference>
<dbReference type="RefSeq" id="NP_732517.2">
    <molecule id="Q24151-3"/>
    <property type="nucleotide sequence ID" value="NM_169900.3"/>
</dbReference>
<dbReference type="RefSeq" id="NP_996242.1">
    <molecule id="Q24151-2"/>
    <property type="nucleotide sequence ID" value="NM_206520.2"/>
</dbReference>
<dbReference type="RefSeq" id="NP_996243.1">
    <molecule id="Q24151-1"/>
    <property type="nucleotide sequence ID" value="NM_206521.2"/>
</dbReference>
<dbReference type="SMR" id="Q24151"/>
<dbReference type="BioGRID" id="67407">
    <property type="interactions" value="64"/>
</dbReference>
<dbReference type="DIP" id="DIP-29510N"/>
<dbReference type="FunCoup" id="Q24151">
    <property type="interactions" value="999"/>
</dbReference>
<dbReference type="IntAct" id="Q24151">
    <property type="interactions" value="5"/>
</dbReference>
<dbReference type="STRING" id="7227.FBpp0306651"/>
<dbReference type="iPTMnet" id="Q24151"/>
<dbReference type="PaxDb" id="7227-FBpp0088489"/>
<dbReference type="DNASU" id="42428"/>
<dbReference type="EnsemblMetazoa" id="FBtr0089484">
    <molecule id="Q24151-3"/>
    <property type="protein sequence ID" value="FBpp0088487"/>
    <property type="gene ID" value="FBgn0016917"/>
</dbReference>
<dbReference type="EnsemblMetazoa" id="FBtr0089485">
    <molecule id="Q24151-2"/>
    <property type="protein sequence ID" value="FBpp0088488"/>
    <property type="gene ID" value="FBgn0016917"/>
</dbReference>
<dbReference type="EnsemblMetazoa" id="FBtr0089486">
    <molecule id="Q24151-1"/>
    <property type="protein sequence ID" value="FBpp0088489"/>
    <property type="gene ID" value="FBgn0016917"/>
</dbReference>
<dbReference type="EnsemblMetazoa" id="FBtr0089487">
    <molecule id="Q24151-2"/>
    <property type="protein sequence ID" value="FBpp0088978"/>
    <property type="gene ID" value="FBgn0016917"/>
</dbReference>
<dbReference type="EnsemblMetazoa" id="FBtr0100457">
    <molecule id="Q24151-4"/>
    <property type="protein sequence ID" value="FBpp0099882"/>
    <property type="gene ID" value="FBgn0016917"/>
</dbReference>
<dbReference type="EnsemblMetazoa" id="FBtr0334581">
    <molecule id="Q24151-4"/>
    <property type="protein sequence ID" value="FBpp0306648"/>
    <property type="gene ID" value="FBgn0016917"/>
</dbReference>
<dbReference type="EnsemblMetazoa" id="FBtr0334586">
    <molecule id="Q24151-1"/>
    <property type="protein sequence ID" value="FBpp0306653"/>
    <property type="gene ID" value="FBgn0016917"/>
</dbReference>
<dbReference type="GeneID" id="42428"/>
<dbReference type="KEGG" id="dme:Dmel_CG4257"/>
<dbReference type="AGR" id="FB:FBgn0016917"/>
<dbReference type="CTD" id="42428"/>
<dbReference type="FlyBase" id="FBgn0016917">
    <property type="gene designation" value="Stat92E"/>
</dbReference>
<dbReference type="VEuPathDB" id="VectorBase:FBgn0016917"/>
<dbReference type="eggNOG" id="KOG3667">
    <property type="taxonomic scope" value="Eukaryota"/>
</dbReference>
<dbReference type="GeneTree" id="ENSGT01080000257420"/>
<dbReference type="InParanoid" id="Q24151"/>
<dbReference type="OrthoDB" id="19300at2759"/>
<dbReference type="PhylomeDB" id="Q24151"/>
<dbReference type="Reactome" id="R-DME-1059683">
    <property type="pathway name" value="Interleukin-6 signaling"/>
</dbReference>
<dbReference type="Reactome" id="R-DME-1169408">
    <property type="pathway name" value="ISG15 antiviral mechanism"/>
</dbReference>
<dbReference type="Reactome" id="R-DME-1251985">
    <property type="pathway name" value="Nuclear signaling by ERBB4"/>
</dbReference>
<dbReference type="Reactome" id="R-DME-1433557">
    <property type="pathway name" value="Signaling by SCF-KIT"/>
</dbReference>
<dbReference type="Reactome" id="R-DME-186763">
    <property type="pathway name" value="Downstream signal transduction"/>
</dbReference>
<dbReference type="Reactome" id="R-DME-201556">
    <property type="pathway name" value="Signaling by ALK"/>
</dbReference>
<dbReference type="Reactome" id="R-DME-209228">
    <property type="pathway name" value="Formation of the activated STAT92E dimer and transport to the nucleus"/>
</dbReference>
<dbReference type="Reactome" id="R-DME-209394">
    <property type="pathway name" value="Transcriptional activtion and repression of REL-68 target genes"/>
</dbReference>
<dbReference type="Reactome" id="R-DME-209405">
    <property type="pathway name" value="JAK/STAT pathway"/>
</dbReference>
<dbReference type="Reactome" id="R-DME-210671">
    <property type="pathway name" value="Transcriptional repression by nuclear factors"/>
</dbReference>
<dbReference type="Reactome" id="R-DME-210688">
    <property type="pathway name" value="Dephosphorylation by PTP61F phosphatases"/>
</dbReference>
<dbReference type="Reactome" id="R-DME-210693">
    <property type="pathway name" value="STAT92E dimer dephosphorylated in the nucleus and transported to the cytosol"/>
</dbReference>
<dbReference type="Reactome" id="R-DME-3249367">
    <property type="pathway name" value="STAT6-mediated induction of chemokines"/>
</dbReference>
<dbReference type="Reactome" id="R-DME-6783783">
    <property type="pathway name" value="Interleukin-10 signaling"/>
</dbReference>
<dbReference type="Reactome" id="R-DME-6785807">
    <property type="pathway name" value="Interleukin-4 and Interleukin-13 signaling"/>
</dbReference>
<dbReference type="Reactome" id="R-DME-877300">
    <property type="pathway name" value="Interferon gamma signaling"/>
</dbReference>
<dbReference type="Reactome" id="R-DME-877312">
    <property type="pathway name" value="Regulation of IFNG signaling"/>
</dbReference>
<dbReference type="Reactome" id="R-DME-8854691">
    <property type="pathway name" value="Interleukin-20 family signaling"/>
</dbReference>
<dbReference type="Reactome" id="R-DME-8983432">
    <property type="pathway name" value="Interleukin-15 signaling"/>
</dbReference>
<dbReference type="Reactome" id="R-DME-8984722">
    <property type="pathway name" value="Interleukin-35 Signalling"/>
</dbReference>
<dbReference type="Reactome" id="R-DME-8985947">
    <property type="pathway name" value="Interleukin-9 signaling"/>
</dbReference>
<dbReference type="Reactome" id="R-DME-9008059">
    <property type="pathway name" value="Interleukin-37 signaling"/>
</dbReference>
<dbReference type="Reactome" id="R-DME-9020591">
    <property type="pathway name" value="Interleukin-12 signaling"/>
</dbReference>
<dbReference type="Reactome" id="R-DME-9020933">
    <property type="pathway name" value="Interleukin-23 signaling"/>
</dbReference>
<dbReference type="Reactome" id="R-DME-9020956">
    <property type="pathway name" value="Interleukin-27 signaling"/>
</dbReference>
<dbReference type="Reactome" id="R-DME-909733">
    <property type="pathway name" value="Interferon alpha/beta signaling"/>
</dbReference>
<dbReference type="Reactome" id="R-DME-9701898">
    <property type="pathway name" value="STAT3 nuclear events downstream of ALK signaling"/>
</dbReference>
<dbReference type="Reactome" id="R-DME-9833482">
    <property type="pathway name" value="PKR-mediated signaling"/>
</dbReference>
<dbReference type="Reactome" id="R-DME-9860927">
    <property type="pathway name" value="Turbulent (oscillatory, disturbed) flow shear stress activates signaling by PIEZO1 and integrins in endothelial cells"/>
</dbReference>
<dbReference type="SignaLink" id="Q24151"/>
<dbReference type="BioGRID-ORCS" id="42428">
    <property type="hits" value="0 hits in 3 CRISPR screens"/>
</dbReference>
<dbReference type="GenomeRNAi" id="42428"/>
<dbReference type="PRO" id="PR:Q24151"/>
<dbReference type="Proteomes" id="UP000000803">
    <property type="component" value="Chromosome 3R"/>
</dbReference>
<dbReference type="Bgee" id="FBgn0016917">
    <property type="expression patterns" value="Expressed in fat body cell in open tracheal system trachea and 295 other cell types or tissues"/>
</dbReference>
<dbReference type="ExpressionAtlas" id="Q24151">
    <property type="expression patterns" value="baseline and differential"/>
</dbReference>
<dbReference type="GO" id="GO:0005737">
    <property type="term" value="C:cytoplasm"/>
    <property type="evidence" value="ECO:0000318"/>
    <property type="project" value="GO_Central"/>
</dbReference>
<dbReference type="GO" id="GO:0098592">
    <property type="term" value="C:cytoplasmic side of apical plasma membrane"/>
    <property type="evidence" value="ECO:0000314"/>
    <property type="project" value="FlyBase"/>
</dbReference>
<dbReference type="GO" id="GO:0005829">
    <property type="term" value="C:cytosol"/>
    <property type="evidence" value="ECO:0000314"/>
    <property type="project" value="FlyBase"/>
</dbReference>
<dbReference type="GO" id="GO:0005654">
    <property type="term" value="C:nucleoplasm"/>
    <property type="evidence" value="ECO:0000304"/>
    <property type="project" value="Reactome"/>
</dbReference>
<dbReference type="GO" id="GO:0005634">
    <property type="term" value="C:nucleus"/>
    <property type="evidence" value="ECO:0000314"/>
    <property type="project" value="FlyBase"/>
</dbReference>
<dbReference type="GO" id="GO:0005126">
    <property type="term" value="F:cytokine receptor binding"/>
    <property type="evidence" value="ECO:0000353"/>
    <property type="project" value="FlyBase"/>
</dbReference>
<dbReference type="GO" id="GO:0003677">
    <property type="term" value="F:DNA binding"/>
    <property type="evidence" value="ECO:0000250"/>
    <property type="project" value="FlyBase"/>
</dbReference>
<dbReference type="GO" id="GO:0001228">
    <property type="term" value="F:DNA-binding transcription activator activity, RNA polymerase II-specific"/>
    <property type="evidence" value="ECO:0000314"/>
    <property type="project" value="FlyBase"/>
</dbReference>
<dbReference type="GO" id="GO:0000981">
    <property type="term" value="F:DNA-binding transcription factor activity, RNA polymerase II-specific"/>
    <property type="evidence" value="ECO:0000318"/>
    <property type="project" value="GO_Central"/>
</dbReference>
<dbReference type="GO" id="GO:0042393">
    <property type="term" value="F:histone binding"/>
    <property type="evidence" value="ECO:0000314"/>
    <property type="project" value="FlyBase"/>
</dbReference>
<dbReference type="GO" id="GO:0000978">
    <property type="term" value="F:RNA polymerase II cis-regulatory region sequence-specific DNA binding"/>
    <property type="evidence" value="ECO:0000314"/>
    <property type="project" value="FlyBase"/>
</dbReference>
<dbReference type="GO" id="GO:0140374">
    <property type="term" value="P:antiviral innate immune response"/>
    <property type="evidence" value="ECO:0000314"/>
    <property type="project" value="FlyBase"/>
</dbReference>
<dbReference type="GO" id="GO:0007350">
    <property type="term" value="P:blastoderm segmentation"/>
    <property type="evidence" value="ECO:0000315"/>
    <property type="project" value="FlyBase"/>
</dbReference>
<dbReference type="GO" id="GO:0007298">
    <property type="term" value="P:border follicle cell migration"/>
    <property type="evidence" value="ECO:0000315"/>
    <property type="project" value="FlyBase"/>
</dbReference>
<dbReference type="GO" id="GO:0043697">
    <property type="term" value="P:cell dedifferentiation"/>
    <property type="evidence" value="ECO:0000270"/>
    <property type="project" value="FlyBase"/>
</dbReference>
<dbReference type="GO" id="GO:0007259">
    <property type="term" value="P:cell surface receptor signaling pathway via JAK-STAT"/>
    <property type="evidence" value="ECO:0000314"/>
    <property type="project" value="FlyBase"/>
</dbReference>
<dbReference type="GO" id="GO:0097696">
    <property type="term" value="P:cell surface receptor signaling pathway via STAT"/>
    <property type="evidence" value="ECO:0000314"/>
    <property type="project" value="FlyBase"/>
</dbReference>
<dbReference type="GO" id="GO:0071222">
    <property type="term" value="P:cellular response to lipopolysaccharide"/>
    <property type="evidence" value="ECO:0000314"/>
    <property type="project" value="FlyBase"/>
</dbReference>
<dbReference type="GO" id="GO:0071481">
    <property type="term" value="P:cellular response to X-ray"/>
    <property type="evidence" value="ECO:0000315"/>
    <property type="project" value="FlyBase"/>
</dbReference>
<dbReference type="GO" id="GO:0006952">
    <property type="term" value="P:defense response"/>
    <property type="evidence" value="ECO:0000314"/>
    <property type="project" value="FlyBase"/>
</dbReference>
<dbReference type="GO" id="GO:0071907">
    <property type="term" value="P:determination of digestive tract left/right asymmetry"/>
    <property type="evidence" value="ECO:0000315"/>
    <property type="project" value="FlyBase"/>
</dbReference>
<dbReference type="GO" id="GO:0007455">
    <property type="term" value="P:eye-antennal disc morphogenesis"/>
    <property type="evidence" value="ECO:0000315"/>
    <property type="project" value="FlyBase"/>
</dbReference>
<dbReference type="GO" id="GO:0030713">
    <property type="term" value="P:follicle cell of egg chamber stalk formation"/>
    <property type="evidence" value="ECO:0000315"/>
    <property type="project" value="FlyBase"/>
</dbReference>
<dbReference type="GO" id="GO:0030718">
    <property type="term" value="P:germ-line stem cell population maintenance"/>
    <property type="evidence" value="ECO:0000315"/>
    <property type="project" value="FlyBase"/>
</dbReference>
<dbReference type="GO" id="GO:0007442">
    <property type="term" value="P:hindgut morphogenesis"/>
    <property type="evidence" value="ECO:0000315"/>
    <property type="project" value="FlyBase"/>
</dbReference>
<dbReference type="GO" id="GO:0036335">
    <property type="term" value="P:intestinal stem cell homeostasis"/>
    <property type="evidence" value="ECO:0000315"/>
    <property type="project" value="FlyBase"/>
</dbReference>
<dbReference type="GO" id="GO:0035171">
    <property type="term" value="P:lamellocyte differentiation"/>
    <property type="evidence" value="ECO:0000315"/>
    <property type="project" value="FlyBase"/>
</dbReference>
<dbReference type="GO" id="GO:0035167">
    <property type="term" value="P:larval lymph gland hemopoiesis"/>
    <property type="evidence" value="ECO:0000315"/>
    <property type="project" value="FlyBase"/>
</dbReference>
<dbReference type="GO" id="GO:0007526">
    <property type="term" value="P:larval somatic muscle development"/>
    <property type="evidence" value="ECO:0000315"/>
    <property type="project" value="FlyBase"/>
</dbReference>
<dbReference type="GO" id="GO:0007616">
    <property type="term" value="P:long-term memory"/>
    <property type="evidence" value="ECO:0000315"/>
    <property type="project" value="FlyBase"/>
</dbReference>
<dbReference type="GO" id="GO:0048542">
    <property type="term" value="P:lymph gland development"/>
    <property type="evidence" value="ECO:0000315"/>
    <property type="project" value="FlyBase"/>
</dbReference>
<dbReference type="GO" id="GO:0019100">
    <property type="term" value="P:male germ-line sex determination"/>
    <property type="evidence" value="ECO:0000315"/>
    <property type="project" value="FlyBase"/>
</dbReference>
<dbReference type="GO" id="GO:0008348">
    <property type="term" value="P:negative regulation of antimicrobial humoral response"/>
    <property type="evidence" value="ECO:0000315"/>
    <property type="project" value="FlyBase"/>
</dbReference>
<dbReference type="GO" id="GO:2000737">
    <property type="term" value="P:negative regulation of stem cell differentiation"/>
    <property type="evidence" value="ECO:0000315"/>
    <property type="project" value="FlyBase"/>
</dbReference>
<dbReference type="GO" id="GO:0007399">
    <property type="term" value="P:nervous system development"/>
    <property type="evidence" value="ECO:0000315"/>
    <property type="project" value="FlyBase"/>
</dbReference>
<dbReference type="GO" id="GO:0030720">
    <property type="term" value="P:oocyte localization involved in germarium-derived egg chamber formation"/>
    <property type="evidence" value="ECO:0000315"/>
    <property type="project" value="FlyBase"/>
</dbReference>
<dbReference type="GO" id="GO:0048477">
    <property type="term" value="P:oogenesis"/>
    <property type="evidence" value="ECO:0000315"/>
    <property type="project" value="FlyBase"/>
</dbReference>
<dbReference type="GO" id="GO:0007424">
    <property type="term" value="P:open tracheal system development"/>
    <property type="evidence" value="ECO:0000315"/>
    <property type="project" value="FlyBase"/>
</dbReference>
<dbReference type="GO" id="GO:0008284">
    <property type="term" value="P:positive regulation of cell population proliferation"/>
    <property type="evidence" value="ECO:0000315"/>
    <property type="project" value="FlyBase"/>
</dbReference>
<dbReference type="GO" id="GO:0002230">
    <property type="term" value="P:positive regulation of defense response to virus by host"/>
    <property type="evidence" value="ECO:0000315"/>
    <property type="project" value="FlyBase"/>
</dbReference>
<dbReference type="GO" id="GO:0031453">
    <property type="term" value="P:positive regulation of heterochromatin formation"/>
    <property type="evidence" value="ECO:0000315"/>
    <property type="project" value="FlyBase"/>
</dbReference>
<dbReference type="GO" id="GO:0007538">
    <property type="term" value="P:primary sex determination"/>
    <property type="evidence" value="ECO:0000315"/>
    <property type="project" value="FlyBase"/>
</dbReference>
<dbReference type="GO" id="GO:0042127">
    <property type="term" value="P:regulation of cell population proliferation"/>
    <property type="evidence" value="ECO:0000318"/>
    <property type="project" value="GO_Central"/>
</dbReference>
<dbReference type="GO" id="GO:0006357">
    <property type="term" value="P:regulation of transcription by RNA polymerase II"/>
    <property type="evidence" value="ECO:0000318"/>
    <property type="project" value="GO_Central"/>
</dbReference>
<dbReference type="GO" id="GO:0007379">
    <property type="term" value="P:segment specification"/>
    <property type="evidence" value="ECO:0000315"/>
    <property type="project" value="FlyBase"/>
</dbReference>
<dbReference type="GO" id="GO:0017145">
    <property type="term" value="P:stem cell division"/>
    <property type="evidence" value="ECO:0000315"/>
    <property type="project" value="FlyBase"/>
</dbReference>
<dbReference type="GO" id="GO:0019827">
    <property type="term" value="P:stem cell population maintenance"/>
    <property type="evidence" value="ECO:0000315"/>
    <property type="project" value="FlyBase"/>
</dbReference>
<dbReference type="GO" id="GO:0042246">
    <property type="term" value="P:tissue regeneration"/>
    <property type="evidence" value="ECO:0000315"/>
    <property type="project" value="FlyBase"/>
</dbReference>
<dbReference type="GO" id="GO:0007472">
    <property type="term" value="P:wing disc morphogenesis"/>
    <property type="evidence" value="ECO:0000315"/>
    <property type="project" value="FlyBase"/>
</dbReference>
<dbReference type="GO" id="GO:0042060">
    <property type="term" value="P:wound healing"/>
    <property type="evidence" value="ECO:0000270"/>
    <property type="project" value="FlyBase"/>
</dbReference>
<dbReference type="CDD" id="cd09919">
    <property type="entry name" value="SH2_STAT_family"/>
    <property type="match status" value="1"/>
</dbReference>
<dbReference type="CDD" id="cd14786">
    <property type="entry name" value="STAT_CCD"/>
    <property type="match status" value="1"/>
</dbReference>
<dbReference type="CDD" id="cd14801">
    <property type="entry name" value="STAT_DBD"/>
    <property type="match status" value="1"/>
</dbReference>
<dbReference type="FunFam" id="1.20.1050.20:FF:000006">
    <property type="entry name" value="Signal transducer and activator of transcription"/>
    <property type="match status" value="1"/>
</dbReference>
<dbReference type="FunFam" id="3.30.505.10:FF:000095">
    <property type="entry name" value="Signal transducer and activator of transcription"/>
    <property type="match status" value="1"/>
</dbReference>
<dbReference type="FunFam" id="2.60.40.630:FF:000003">
    <property type="entry name" value="Signal transducer and transcription activator 6"/>
    <property type="match status" value="1"/>
</dbReference>
<dbReference type="Gene3D" id="1.10.238.10">
    <property type="entry name" value="EF-hand"/>
    <property type="match status" value="1"/>
</dbReference>
<dbReference type="Gene3D" id="3.30.505.10">
    <property type="entry name" value="SH2 domain"/>
    <property type="match status" value="1"/>
</dbReference>
<dbReference type="Gene3D" id="1.20.1050.20">
    <property type="entry name" value="STAT transcription factor, all-alpha domain"/>
    <property type="match status" value="1"/>
</dbReference>
<dbReference type="Gene3D" id="2.60.40.630">
    <property type="entry name" value="STAT transcription factor, DNA-binding domain"/>
    <property type="match status" value="1"/>
</dbReference>
<dbReference type="Gene3D" id="1.10.532.10">
    <property type="entry name" value="STAT transcription factor, N-terminal domain"/>
    <property type="match status" value="1"/>
</dbReference>
<dbReference type="InterPro" id="IPR008967">
    <property type="entry name" value="p53-like_TF_DNA-bd_sf"/>
</dbReference>
<dbReference type="InterPro" id="IPR000980">
    <property type="entry name" value="SH2"/>
</dbReference>
<dbReference type="InterPro" id="IPR036860">
    <property type="entry name" value="SH2_dom_sf"/>
</dbReference>
<dbReference type="InterPro" id="IPR001217">
    <property type="entry name" value="STAT"/>
</dbReference>
<dbReference type="InterPro" id="IPR048988">
    <property type="entry name" value="STAT_linker"/>
</dbReference>
<dbReference type="InterPro" id="IPR036535">
    <property type="entry name" value="STAT_N_sf"/>
</dbReference>
<dbReference type="InterPro" id="IPR013800">
    <property type="entry name" value="STAT_TF_alpha"/>
</dbReference>
<dbReference type="InterPro" id="IPR015988">
    <property type="entry name" value="STAT_TF_coiled-coil"/>
</dbReference>
<dbReference type="InterPro" id="IPR013801">
    <property type="entry name" value="STAT_TF_DNA-bd"/>
</dbReference>
<dbReference type="InterPro" id="IPR012345">
    <property type="entry name" value="STAT_TF_DNA-bd_N"/>
</dbReference>
<dbReference type="InterPro" id="IPR013799">
    <property type="entry name" value="STAT_TF_prot_interaction"/>
</dbReference>
<dbReference type="PANTHER" id="PTHR11801">
    <property type="entry name" value="SIGNAL TRANSDUCER AND ACTIVATOR OF TRANSCRIPTION"/>
    <property type="match status" value="1"/>
</dbReference>
<dbReference type="Pfam" id="PF00017">
    <property type="entry name" value="SH2"/>
    <property type="match status" value="1"/>
</dbReference>
<dbReference type="Pfam" id="PF01017">
    <property type="entry name" value="STAT_alpha"/>
    <property type="match status" value="1"/>
</dbReference>
<dbReference type="Pfam" id="PF02864">
    <property type="entry name" value="STAT_bind"/>
    <property type="match status" value="1"/>
</dbReference>
<dbReference type="Pfam" id="PF02865">
    <property type="entry name" value="STAT_int"/>
    <property type="match status" value="1"/>
</dbReference>
<dbReference type="Pfam" id="PF21354">
    <property type="entry name" value="STAT_linker"/>
    <property type="match status" value="1"/>
</dbReference>
<dbReference type="SMART" id="SM00964">
    <property type="entry name" value="STAT_int"/>
    <property type="match status" value="1"/>
</dbReference>
<dbReference type="SUPFAM" id="SSF49417">
    <property type="entry name" value="p53-like transcription factors"/>
    <property type="match status" value="1"/>
</dbReference>
<dbReference type="SUPFAM" id="SSF55550">
    <property type="entry name" value="SH2 domain"/>
    <property type="match status" value="1"/>
</dbReference>
<dbReference type="SUPFAM" id="SSF47655">
    <property type="entry name" value="STAT"/>
    <property type="match status" value="1"/>
</dbReference>
<dbReference type="PROSITE" id="PS50001">
    <property type="entry name" value="SH2"/>
    <property type="match status" value="1"/>
</dbReference>
<comment type="function">
    <text evidence="4 5">Might play a role in signal transduction and activation of transcription. Plays an important role in the segmental pattern formation in the early embryo by activating specific stripes of pair rule gene expression in early development as part of the Janus kinase-STAT pathway (PubMed:8608595). Might play a role in male germline stem cell maintenance (PubMed:34644293).</text>
</comment>
<comment type="subunit">
    <text>Forms a homodimer or a heterodimer with a related family member.</text>
</comment>
<comment type="subcellular location">
    <subcellularLocation>
        <location evidence="1">Cytoplasm</location>
    </subcellularLocation>
    <subcellularLocation>
        <location evidence="1">Nucleus</location>
    </subcellularLocation>
    <text evidence="1">Translocated into the nucleus in response to phosphorylation.</text>
</comment>
<comment type="alternative products">
    <event type="alternative splicing"/>
    <isoform>
        <id>Q24151-1</id>
        <name>F</name>
        <name>Long</name>
        <sequence type="displayed"/>
    </isoform>
    <isoform>
        <id>Q24151-3</id>
        <name>B</name>
        <sequence type="described" ref="VSP_012752 VSP_006290"/>
    </isoform>
    <isoform>
        <id>Q24151-2</id>
        <name>C</name>
        <name>E</name>
        <name>Short</name>
        <sequence type="described" ref="VSP_006290"/>
    </isoform>
    <isoform>
        <id>Q24151-4</id>
        <name>G</name>
        <sequence type="described" ref="VSP_012752"/>
    </isoform>
</comment>
<comment type="developmental stage">
    <text>Expressed throughout embryonic, larval, pupal, and adult stages, with some decrease in the late embryonic stages. The expression is uniform in unfertilized or just fertilized eggs, suggesting maternally deposited mRNA. At blastoderm stage, expression pattern shows stripes, that are reminiscent of many pair rule genes pattern.</text>
</comment>
<comment type="PTM">
    <text evidence="3 6">Tyrosine phosphorylated by hopscotch. Phosphorylation is required for DNA-binding activity and dimerization.</text>
</comment>
<comment type="disruption phenotype">
    <text evidence="5 6">Exibits aberrant expression of the pair rule gene even-skipped at the cellular blastoderm stage, leading to larval segmentation defects.</text>
</comment>
<comment type="similarity">
    <text evidence="8">Belongs to the transcription factor STAT family.</text>
</comment>
<comment type="sequence caution" evidence="8">
    <conflict type="erroneous initiation">
        <sequence resource="EMBL-CDS" id="AAM11192"/>
    </conflict>
</comment>
<gene>
    <name type="primary">Stat92E</name>
    <name type="synonym">MARE</name>
    <name type="synonym">mrL</name>
    <name type="synonym">Stat</name>
    <name type="ORF">CG4257</name>
</gene>
<keyword id="KW-0010">Activator</keyword>
<keyword id="KW-0025">Alternative splicing</keyword>
<keyword id="KW-0963">Cytoplasm</keyword>
<keyword id="KW-0217">Developmental protein</keyword>
<keyword id="KW-0238">DNA-binding</keyword>
<keyword id="KW-0539">Nucleus</keyword>
<keyword id="KW-0597">Phosphoprotein</keyword>
<keyword id="KW-1185">Reference proteome</keyword>
<keyword id="KW-0727">SH2 domain</keyword>
<keyword id="KW-0804">Transcription</keyword>
<keyword id="KW-0805">Transcription regulation</keyword>
<reference key="1">
    <citation type="journal article" date="1996" name="Cell">
        <title>Marelle acts downstream of the Drosophila HOP/JAK kinase and encodes a protein similar to the mammalian STATs.</title>
        <authorList>
            <person name="Hou X.S."/>
            <person name="Melnick M.B."/>
            <person name="Perrimon N."/>
        </authorList>
    </citation>
    <scope>NUCLEOTIDE SEQUENCE [MRNA] (ISOFORM F)</scope>
    <scope>FUNCTION</scope>
    <scope>DISRUPTION PHENOTYPE</scope>
    <source>
        <tissue>Embryo</tissue>
    </source>
</reference>
<reference key="2">
    <citation type="journal article" date="1996" name="Cell">
        <title>Identification of a Stat gene that functions in Drosophila development.</title>
        <authorList>
            <person name="Yan R."/>
            <person name="Small S."/>
            <person name="Desplan C."/>
            <person name="Dearolf C.R."/>
            <person name="Darnell J.E. Jr."/>
        </authorList>
    </citation>
    <scope>NUCLEOTIDE SEQUENCE [MRNA] (ISOFORM C)</scope>
    <scope>PHOSPHORYLATION AT TYR-711</scope>
    <scope>DISRUPTION PHENOTYPE</scope>
    <source>
        <tissue>Embryo</tissue>
    </source>
</reference>
<reference key="3">
    <citation type="journal article" date="2000" name="Science">
        <title>The genome sequence of Drosophila melanogaster.</title>
        <authorList>
            <person name="Adams M.D."/>
            <person name="Celniker S.E."/>
            <person name="Holt R.A."/>
            <person name="Evans C.A."/>
            <person name="Gocayne J.D."/>
            <person name="Amanatides P.G."/>
            <person name="Scherer S.E."/>
            <person name="Li P.W."/>
            <person name="Hoskins R.A."/>
            <person name="Galle R.F."/>
            <person name="George R.A."/>
            <person name="Lewis S.E."/>
            <person name="Richards S."/>
            <person name="Ashburner M."/>
            <person name="Henderson S.N."/>
            <person name="Sutton G.G."/>
            <person name="Wortman J.R."/>
            <person name="Yandell M.D."/>
            <person name="Zhang Q."/>
            <person name="Chen L.X."/>
            <person name="Brandon R.C."/>
            <person name="Rogers Y.-H.C."/>
            <person name="Blazej R.G."/>
            <person name="Champe M."/>
            <person name="Pfeiffer B.D."/>
            <person name="Wan K.H."/>
            <person name="Doyle C."/>
            <person name="Baxter E.G."/>
            <person name="Helt G."/>
            <person name="Nelson C.R."/>
            <person name="Miklos G.L.G."/>
            <person name="Abril J.F."/>
            <person name="Agbayani A."/>
            <person name="An H.-J."/>
            <person name="Andrews-Pfannkoch C."/>
            <person name="Baldwin D."/>
            <person name="Ballew R.M."/>
            <person name="Basu A."/>
            <person name="Baxendale J."/>
            <person name="Bayraktaroglu L."/>
            <person name="Beasley E.M."/>
            <person name="Beeson K.Y."/>
            <person name="Benos P.V."/>
            <person name="Berman B.P."/>
            <person name="Bhandari D."/>
            <person name="Bolshakov S."/>
            <person name="Borkova D."/>
            <person name="Botchan M.R."/>
            <person name="Bouck J."/>
            <person name="Brokstein P."/>
            <person name="Brottier P."/>
            <person name="Burtis K.C."/>
            <person name="Busam D.A."/>
            <person name="Butler H."/>
            <person name="Cadieu E."/>
            <person name="Center A."/>
            <person name="Chandra I."/>
            <person name="Cherry J.M."/>
            <person name="Cawley S."/>
            <person name="Dahlke C."/>
            <person name="Davenport L.B."/>
            <person name="Davies P."/>
            <person name="de Pablos B."/>
            <person name="Delcher A."/>
            <person name="Deng Z."/>
            <person name="Mays A.D."/>
            <person name="Dew I."/>
            <person name="Dietz S.M."/>
            <person name="Dodson K."/>
            <person name="Doup L.E."/>
            <person name="Downes M."/>
            <person name="Dugan-Rocha S."/>
            <person name="Dunkov B.C."/>
            <person name="Dunn P."/>
            <person name="Durbin K.J."/>
            <person name="Evangelista C.C."/>
            <person name="Ferraz C."/>
            <person name="Ferriera S."/>
            <person name="Fleischmann W."/>
            <person name="Fosler C."/>
            <person name="Gabrielian A.E."/>
            <person name="Garg N.S."/>
            <person name="Gelbart W.M."/>
            <person name="Glasser K."/>
            <person name="Glodek A."/>
            <person name="Gong F."/>
            <person name="Gorrell J.H."/>
            <person name="Gu Z."/>
            <person name="Guan P."/>
            <person name="Harris M."/>
            <person name="Harris N.L."/>
            <person name="Harvey D.A."/>
            <person name="Heiman T.J."/>
            <person name="Hernandez J.R."/>
            <person name="Houck J."/>
            <person name="Hostin D."/>
            <person name="Houston K.A."/>
            <person name="Howland T.J."/>
            <person name="Wei M.-H."/>
            <person name="Ibegwam C."/>
            <person name="Jalali M."/>
            <person name="Kalush F."/>
            <person name="Karpen G.H."/>
            <person name="Ke Z."/>
            <person name="Kennison J.A."/>
            <person name="Ketchum K.A."/>
            <person name="Kimmel B.E."/>
            <person name="Kodira C.D."/>
            <person name="Kraft C.L."/>
            <person name="Kravitz S."/>
            <person name="Kulp D."/>
            <person name="Lai Z."/>
            <person name="Lasko P."/>
            <person name="Lei Y."/>
            <person name="Levitsky A.A."/>
            <person name="Li J.H."/>
            <person name="Li Z."/>
            <person name="Liang Y."/>
            <person name="Lin X."/>
            <person name="Liu X."/>
            <person name="Mattei B."/>
            <person name="McIntosh T.C."/>
            <person name="McLeod M.P."/>
            <person name="McPherson D."/>
            <person name="Merkulov G."/>
            <person name="Milshina N.V."/>
            <person name="Mobarry C."/>
            <person name="Morris J."/>
            <person name="Moshrefi A."/>
            <person name="Mount S.M."/>
            <person name="Moy M."/>
            <person name="Murphy B."/>
            <person name="Murphy L."/>
            <person name="Muzny D.M."/>
            <person name="Nelson D.L."/>
            <person name="Nelson D.R."/>
            <person name="Nelson K.A."/>
            <person name="Nixon K."/>
            <person name="Nusskern D.R."/>
            <person name="Pacleb J.M."/>
            <person name="Palazzolo M."/>
            <person name="Pittman G.S."/>
            <person name="Pan S."/>
            <person name="Pollard J."/>
            <person name="Puri V."/>
            <person name="Reese M.G."/>
            <person name="Reinert K."/>
            <person name="Remington K."/>
            <person name="Saunders R.D.C."/>
            <person name="Scheeler F."/>
            <person name="Shen H."/>
            <person name="Shue B.C."/>
            <person name="Siden-Kiamos I."/>
            <person name="Simpson M."/>
            <person name="Skupski M.P."/>
            <person name="Smith T.J."/>
            <person name="Spier E."/>
            <person name="Spradling A.C."/>
            <person name="Stapleton M."/>
            <person name="Strong R."/>
            <person name="Sun E."/>
            <person name="Svirskas R."/>
            <person name="Tector C."/>
            <person name="Turner R."/>
            <person name="Venter E."/>
            <person name="Wang A.H."/>
            <person name="Wang X."/>
            <person name="Wang Z.-Y."/>
            <person name="Wassarman D.A."/>
            <person name="Weinstock G.M."/>
            <person name="Weissenbach J."/>
            <person name="Williams S.M."/>
            <person name="Woodage T."/>
            <person name="Worley K.C."/>
            <person name="Wu D."/>
            <person name="Yang S."/>
            <person name="Yao Q.A."/>
            <person name="Ye J."/>
            <person name="Yeh R.-F."/>
            <person name="Zaveri J.S."/>
            <person name="Zhan M."/>
            <person name="Zhang G."/>
            <person name="Zhao Q."/>
            <person name="Zheng L."/>
            <person name="Zheng X.H."/>
            <person name="Zhong F.N."/>
            <person name="Zhong W."/>
            <person name="Zhou X."/>
            <person name="Zhu S.C."/>
            <person name="Zhu X."/>
            <person name="Smith H.O."/>
            <person name="Gibbs R.A."/>
            <person name="Myers E.W."/>
            <person name="Rubin G.M."/>
            <person name="Venter J.C."/>
        </authorList>
    </citation>
    <scope>NUCLEOTIDE SEQUENCE [LARGE SCALE GENOMIC DNA]</scope>
    <source>
        <strain>Berkeley</strain>
    </source>
</reference>
<reference key="4">
    <citation type="journal article" date="2002" name="Genome Biol.">
        <title>Annotation of the Drosophila melanogaster euchromatic genome: a systematic review.</title>
        <authorList>
            <person name="Misra S."/>
            <person name="Crosby M.A."/>
            <person name="Mungall C.J."/>
            <person name="Matthews B.B."/>
            <person name="Campbell K.S."/>
            <person name="Hradecky P."/>
            <person name="Huang Y."/>
            <person name="Kaminker J.S."/>
            <person name="Millburn G.H."/>
            <person name="Prochnik S.E."/>
            <person name="Smith C.D."/>
            <person name="Tupy J.L."/>
            <person name="Whitfield E.J."/>
            <person name="Bayraktaroglu L."/>
            <person name="Berman B.P."/>
            <person name="Bettencourt B.R."/>
            <person name="Celniker S.E."/>
            <person name="de Grey A.D.N.J."/>
            <person name="Drysdale R.A."/>
            <person name="Harris N.L."/>
            <person name="Richter J."/>
            <person name="Russo S."/>
            <person name="Schroeder A.J."/>
            <person name="Shu S.Q."/>
            <person name="Stapleton M."/>
            <person name="Yamada C."/>
            <person name="Ashburner M."/>
            <person name="Gelbart W.M."/>
            <person name="Rubin G.M."/>
            <person name="Lewis S.E."/>
        </authorList>
    </citation>
    <scope>GENOME REANNOTATION</scope>
    <scope>ALTERNATIVE SPLICING</scope>
    <source>
        <strain>Berkeley</strain>
    </source>
</reference>
<reference key="5">
    <citation type="submission" date="2005-08" db="EMBL/GenBank/DDBJ databases">
        <authorList>
            <person name="Stapleton M."/>
            <person name="Carlson J.W."/>
            <person name="Chavez C."/>
            <person name="Frise E."/>
            <person name="George R.A."/>
            <person name="Pacleb J.M."/>
            <person name="Park S."/>
            <person name="Wan K.H."/>
            <person name="Yu C."/>
            <person name="Celniker S.E."/>
        </authorList>
    </citation>
    <scope>NUCLEOTIDE SEQUENCE [LARGE SCALE MRNA] (ISOFORM F)</scope>
    <source>
        <strain>Berkeley</strain>
        <tissue>Embryo</tissue>
    </source>
</reference>
<reference key="6">
    <citation type="journal article" date="2002" name="Genome Biol.">
        <title>A Drosophila full-length cDNA resource.</title>
        <authorList>
            <person name="Stapleton M."/>
            <person name="Carlson J.W."/>
            <person name="Brokstein P."/>
            <person name="Yu C."/>
            <person name="Champe M."/>
            <person name="George R.A."/>
            <person name="Guarin H."/>
            <person name="Kronmiller B."/>
            <person name="Pacleb J.M."/>
            <person name="Park S."/>
            <person name="Wan K.H."/>
            <person name="Rubin G.M."/>
            <person name="Celniker S.E."/>
        </authorList>
    </citation>
    <scope>NUCLEOTIDE SEQUENCE [LARGE SCALE MRNA] OF 267-761 (ISOFORM F)</scope>
    <source>
        <strain>Berkeley</strain>
        <tissue>Larva</tissue>
        <tissue>Pupae</tissue>
    </source>
</reference>
<reference key="7">
    <citation type="journal article" date="2008" name="J. Proteome Res.">
        <title>Phosphoproteome analysis of Drosophila melanogaster embryos.</title>
        <authorList>
            <person name="Zhai B."/>
            <person name="Villen J."/>
            <person name="Beausoleil S.A."/>
            <person name="Mintseris J."/>
            <person name="Gygi S.P."/>
        </authorList>
    </citation>
    <scope>PHOSPHORYLATION [LARGE SCALE ANALYSIS] AT TYR-711</scope>
    <scope>IDENTIFICATION BY MASS SPECTROMETRY</scope>
    <source>
        <tissue>Embryo</tissue>
    </source>
</reference>
<reference key="8">
    <citation type="journal article" date="2021" name="PLoS Genet.">
        <title>dRTEL1 is essential for the maintenance of Drosophila male germline stem cells.</title>
        <authorList>
            <person name="Yang Y."/>
            <person name="Kong R."/>
            <person name="Goh F.G."/>
            <person name="Somers W.G."/>
            <person name="Hime G.R."/>
            <person name="Li Z."/>
            <person name="Cai Y."/>
        </authorList>
    </citation>
    <scope>FUNCTION</scope>
</reference>
<proteinExistence type="evidence at protein level"/>
<organism>
    <name type="scientific">Drosophila melanogaster</name>
    <name type="common">Fruit fly</name>
    <dbReference type="NCBI Taxonomy" id="7227"/>
    <lineage>
        <taxon>Eukaryota</taxon>
        <taxon>Metazoa</taxon>
        <taxon>Ecdysozoa</taxon>
        <taxon>Arthropoda</taxon>
        <taxon>Hexapoda</taxon>
        <taxon>Insecta</taxon>
        <taxon>Pterygota</taxon>
        <taxon>Neoptera</taxon>
        <taxon>Endopterygota</taxon>
        <taxon>Diptera</taxon>
        <taxon>Brachycera</taxon>
        <taxon>Muscomorpha</taxon>
        <taxon>Ephydroidea</taxon>
        <taxon>Drosophilidae</taxon>
        <taxon>Drosophila</taxon>
        <taxon>Sophophora</taxon>
    </lineage>
</organism>
<feature type="chain" id="PRO_0000182435" description="Signal transducer and transcription activator">
    <location>
        <begin position="1"/>
        <end position="761"/>
    </location>
</feature>
<feature type="domain" description="SH2" evidence="2">
    <location>
        <begin position="594"/>
        <end position="658"/>
    </location>
</feature>
<feature type="modified residue" description="Phosphotyrosine; by JAK" evidence="3 6">
    <location>
        <position position="711"/>
    </location>
</feature>
<feature type="splice variant" id="VSP_012752" description="In isoform B and isoform G." evidence="8">
    <location>
        <begin position="1"/>
        <end position="126"/>
    </location>
</feature>
<feature type="splice variant" id="VSP_006290" description="In isoform B and isoform C." evidence="7">
    <location>
        <begin position="699"/>
        <end position="705"/>
    </location>
</feature>
<feature type="sequence conflict" description="In Ref. 2; AAB02195." evidence="8" ref="2">
    <original>S</original>
    <variation>T</variation>
    <location>
        <position position="105"/>
    </location>
</feature>
<feature type="sequence conflict" description="In Ref. 2; AAB02195." evidence="8" ref="2">
    <original>L</original>
    <variation>H</variation>
    <location>
        <position position="648"/>
    </location>
</feature>
<accession>Q24151</accession>
<accession>Q0KI43</accession>
<accession>Q24181</accession>
<accession>Q59DV7</accession>
<accession>Q5BIB0</accession>
<accession>Q8IN54</accession>
<accession>Q8SX55</accession>
<accession>Q9VDL8</accession>
<name>STAT_DROME</name>
<sequence>MSLWKRISSHVDCEQRMAAYYEEKGMLELRLCLAPWIEDRIMSEQITPNTTDQLERVALKFNEDLQQKLLSTRTASDQALKFRVVELCALIQRISAVELYTHLRSGLQKELQLVTEKSVAATAGQSMPLNPYNMNNTPMVTGYMVDPSDLLAVSNSCNPPVVQGIGPIHNVQNTGIASPALGMVTPKVELYEVQHQIMQSLNEFGNCANALKLLAQNYSYMLNSTSSPNAEAAYRSLIDEKAAIVLTMRRSFMYYESLHEMVIHELKNWRHQQAQAGNGAPFNEGSLDDIQRCFEMLESFIAHMLAAVKELMRVRLVTEEPELTHLLEQVQNAQKNLVCSAFIVDKQPPQVMKTNTRFAASVRWLIGSQLGIHNNPPTVECIIMSEIQSQRFVTRNTQMDNSSLSGQSSGEIQNASSTMEYQQNNHVFSASFRNMQLKKIKRAEKKGTESVMDEKFALFFYTTTTVNDFQIRVWTLSLPVVVIVHGNQEPQSWATITWDNAFAEIVRDPFMITDRVTWAQLSVALNIKFGSCTGRSLTIDNLDFLYEKLQREERSEYITWNQFCKEPMPDRSFTFWEWFFAIMKLTKDHMLGMWKAGCIMGFINKTKAQTDLLRSVYGIGTFLLRFSDSELGGVTIAYVNENGLVTMLAPWTARDFQVLNLADRIRDLDVLCWLHPSDRNASPVKRDVAFGEFYSKRQEPEPLVLDPVTGYVKSTLHVHVCRNGENGSTSGTPHHAQESMQLGNGDFGMADFDTITNFENF</sequence>
<evidence type="ECO:0000250" key="1"/>
<evidence type="ECO:0000255" key="2">
    <source>
        <dbReference type="PROSITE-ProRule" id="PRU00191"/>
    </source>
</evidence>
<evidence type="ECO:0000269" key="3">
    <source>
    </source>
</evidence>
<evidence type="ECO:0000269" key="4">
    <source>
    </source>
</evidence>
<evidence type="ECO:0000269" key="5">
    <source>
    </source>
</evidence>
<evidence type="ECO:0000269" key="6">
    <source>
    </source>
</evidence>
<evidence type="ECO:0000303" key="7">
    <source>
    </source>
</evidence>
<evidence type="ECO:0000305" key="8"/>
<protein>
    <recommendedName>
        <fullName>Signal transducer and transcription activator</fullName>
        <shortName>d-STAT</shortName>
    </recommendedName>
    <alternativeName>
        <fullName>Protein marelle</fullName>
    </alternativeName>
</protein>